<reference key="1">
    <citation type="journal article" date="2001" name="Nature">
        <title>Complete genome sequence of a multiple drug resistant Salmonella enterica serovar Typhi CT18.</title>
        <authorList>
            <person name="Parkhill J."/>
            <person name="Dougan G."/>
            <person name="James K.D."/>
            <person name="Thomson N.R."/>
            <person name="Pickard D."/>
            <person name="Wain J."/>
            <person name="Churcher C.M."/>
            <person name="Mungall K.L."/>
            <person name="Bentley S.D."/>
            <person name="Holden M.T.G."/>
            <person name="Sebaihia M."/>
            <person name="Baker S."/>
            <person name="Basham D."/>
            <person name="Brooks K."/>
            <person name="Chillingworth T."/>
            <person name="Connerton P."/>
            <person name="Cronin A."/>
            <person name="Davis P."/>
            <person name="Davies R.M."/>
            <person name="Dowd L."/>
            <person name="White N."/>
            <person name="Farrar J."/>
            <person name="Feltwell T."/>
            <person name="Hamlin N."/>
            <person name="Haque A."/>
            <person name="Hien T.T."/>
            <person name="Holroyd S."/>
            <person name="Jagels K."/>
            <person name="Krogh A."/>
            <person name="Larsen T.S."/>
            <person name="Leather S."/>
            <person name="Moule S."/>
            <person name="O'Gaora P."/>
            <person name="Parry C."/>
            <person name="Quail M.A."/>
            <person name="Rutherford K.M."/>
            <person name="Simmonds M."/>
            <person name="Skelton J."/>
            <person name="Stevens K."/>
            <person name="Whitehead S."/>
            <person name="Barrell B.G."/>
        </authorList>
    </citation>
    <scope>NUCLEOTIDE SEQUENCE [LARGE SCALE GENOMIC DNA]</scope>
    <source>
        <strain>CT18</strain>
    </source>
</reference>
<reference key="2">
    <citation type="journal article" date="2003" name="J. Bacteriol.">
        <title>Comparative genomics of Salmonella enterica serovar Typhi strains Ty2 and CT18.</title>
        <authorList>
            <person name="Deng W."/>
            <person name="Liou S.-R."/>
            <person name="Plunkett G. III"/>
            <person name="Mayhew G.F."/>
            <person name="Rose D.J."/>
            <person name="Burland V."/>
            <person name="Kodoyianni V."/>
            <person name="Schwartz D.C."/>
            <person name="Blattner F.R."/>
        </authorList>
    </citation>
    <scope>NUCLEOTIDE SEQUENCE [LARGE SCALE GENOMIC DNA]</scope>
    <source>
        <strain>ATCC 700931 / Ty2</strain>
    </source>
</reference>
<gene>
    <name type="primary">recF</name>
    <name type="ordered locus">STY3942</name>
    <name type="ordered locus">t3683</name>
</gene>
<evidence type="ECO:0000250" key="1"/>
<evidence type="ECO:0000255" key="2"/>
<evidence type="ECO:0000305" key="3"/>
<comment type="function">
    <text evidence="1">The RecF protein is involved in DNA metabolism; it is required for DNA replication and normal SOS inducibility. RecF binds preferentially to single-stranded, linear DNA. It also seems to bind ATP (By similarity).</text>
</comment>
<comment type="subcellular location">
    <subcellularLocation>
        <location evidence="1">Cytoplasm</location>
    </subcellularLocation>
</comment>
<comment type="similarity">
    <text evidence="3">Belongs to the RecF family.</text>
</comment>
<dbReference type="EMBL" id="AL513382">
    <property type="protein sequence ID" value="CAD03159.1"/>
    <property type="molecule type" value="Genomic_DNA"/>
</dbReference>
<dbReference type="EMBL" id="AE014613">
    <property type="protein sequence ID" value="AAO71179.1"/>
    <property type="molecule type" value="Genomic_DNA"/>
</dbReference>
<dbReference type="RefSeq" id="NP_458106.1">
    <property type="nucleotide sequence ID" value="NC_003198.1"/>
</dbReference>
<dbReference type="RefSeq" id="WP_000059373.1">
    <property type="nucleotide sequence ID" value="NZ_WSUR01000023.1"/>
</dbReference>
<dbReference type="SMR" id="Q8Z2N4"/>
<dbReference type="STRING" id="220341.gene:17587802"/>
<dbReference type="KEGG" id="stt:t3683"/>
<dbReference type="KEGG" id="sty:STY3942"/>
<dbReference type="PATRIC" id="fig|220341.7.peg.4024"/>
<dbReference type="eggNOG" id="COG1195">
    <property type="taxonomic scope" value="Bacteria"/>
</dbReference>
<dbReference type="HOGENOM" id="CLU_040267_0_0_6"/>
<dbReference type="OMA" id="GESWSYA"/>
<dbReference type="OrthoDB" id="9803889at2"/>
<dbReference type="Proteomes" id="UP000000541">
    <property type="component" value="Chromosome"/>
</dbReference>
<dbReference type="Proteomes" id="UP000002670">
    <property type="component" value="Chromosome"/>
</dbReference>
<dbReference type="GO" id="GO:0005737">
    <property type="term" value="C:cytoplasm"/>
    <property type="evidence" value="ECO:0007669"/>
    <property type="project" value="UniProtKB-SubCell"/>
</dbReference>
<dbReference type="GO" id="GO:0005524">
    <property type="term" value="F:ATP binding"/>
    <property type="evidence" value="ECO:0007669"/>
    <property type="project" value="UniProtKB-UniRule"/>
</dbReference>
<dbReference type="GO" id="GO:0003697">
    <property type="term" value="F:single-stranded DNA binding"/>
    <property type="evidence" value="ECO:0007669"/>
    <property type="project" value="UniProtKB-UniRule"/>
</dbReference>
<dbReference type="GO" id="GO:0006260">
    <property type="term" value="P:DNA replication"/>
    <property type="evidence" value="ECO:0007669"/>
    <property type="project" value="UniProtKB-UniRule"/>
</dbReference>
<dbReference type="GO" id="GO:0000731">
    <property type="term" value="P:DNA synthesis involved in DNA repair"/>
    <property type="evidence" value="ECO:0007669"/>
    <property type="project" value="TreeGrafter"/>
</dbReference>
<dbReference type="GO" id="GO:0006302">
    <property type="term" value="P:double-strand break repair"/>
    <property type="evidence" value="ECO:0007669"/>
    <property type="project" value="TreeGrafter"/>
</dbReference>
<dbReference type="GO" id="GO:0009432">
    <property type="term" value="P:SOS response"/>
    <property type="evidence" value="ECO:0007669"/>
    <property type="project" value="UniProtKB-UniRule"/>
</dbReference>
<dbReference type="FunFam" id="1.20.1050.90:FF:000001">
    <property type="entry name" value="DNA replication and repair protein RecF"/>
    <property type="match status" value="1"/>
</dbReference>
<dbReference type="Gene3D" id="3.40.50.300">
    <property type="entry name" value="P-loop containing nucleotide triphosphate hydrolases"/>
    <property type="match status" value="1"/>
</dbReference>
<dbReference type="Gene3D" id="1.20.1050.90">
    <property type="entry name" value="RecF/RecN/SMC, N-terminal domain"/>
    <property type="match status" value="1"/>
</dbReference>
<dbReference type="HAMAP" id="MF_00365">
    <property type="entry name" value="RecF"/>
    <property type="match status" value="1"/>
</dbReference>
<dbReference type="InterPro" id="IPR001238">
    <property type="entry name" value="DNA-binding_RecF"/>
</dbReference>
<dbReference type="InterPro" id="IPR018078">
    <property type="entry name" value="DNA-binding_RecF_CS"/>
</dbReference>
<dbReference type="InterPro" id="IPR027417">
    <property type="entry name" value="P-loop_NTPase"/>
</dbReference>
<dbReference type="InterPro" id="IPR003395">
    <property type="entry name" value="RecF/RecN/SMC_N"/>
</dbReference>
<dbReference type="InterPro" id="IPR042174">
    <property type="entry name" value="RecF_2"/>
</dbReference>
<dbReference type="NCBIfam" id="TIGR00611">
    <property type="entry name" value="recf"/>
    <property type="match status" value="1"/>
</dbReference>
<dbReference type="PANTHER" id="PTHR32182">
    <property type="entry name" value="DNA REPLICATION AND REPAIR PROTEIN RECF"/>
    <property type="match status" value="1"/>
</dbReference>
<dbReference type="PANTHER" id="PTHR32182:SF0">
    <property type="entry name" value="DNA REPLICATION AND REPAIR PROTEIN RECF"/>
    <property type="match status" value="1"/>
</dbReference>
<dbReference type="Pfam" id="PF02463">
    <property type="entry name" value="SMC_N"/>
    <property type="match status" value="1"/>
</dbReference>
<dbReference type="SUPFAM" id="SSF52540">
    <property type="entry name" value="P-loop containing nucleoside triphosphate hydrolases"/>
    <property type="match status" value="1"/>
</dbReference>
<dbReference type="PROSITE" id="PS00617">
    <property type="entry name" value="RECF_1"/>
    <property type="match status" value="1"/>
</dbReference>
<dbReference type="PROSITE" id="PS00618">
    <property type="entry name" value="RECF_2"/>
    <property type="match status" value="1"/>
</dbReference>
<keyword id="KW-0067">ATP-binding</keyword>
<keyword id="KW-0963">Cytoplasm</keyword>
<keyword id="KW-0227">DNA damage</keyword>
<keyword id="KW-0234">DNA repair</keyword>
<keyword id="KW-0235">DNA replication</keyword>
<keyword id="KW-0238">DNA-binding</keyword>
<keyword id="KW-0547">Nucleotide-binding</keyword>
<keyword id="KW-0742">SOS response</keyword>
<proteinExistence type="inferred from homology"/>
<organism>
    <name type="scientific">Salmonella typhi</name>
    <dbReference type="NCBI Taxonomy" id="90370"/>
    <lineage>
        <taxon>Bacteria</taxon>
        <taxon>Pseudomonadati</taxon>
        <taxon>Pseudomonadota</taxon>
        <taxon>Gammaproteobacteria</taxon>
        <taxon>Enterobacterales</taxon>
        <taxon>Enterobacteriaceae</taxon>
        <taxon>Salmonella</taxon>
    </lineage>
</organism>
<name>RECF_SALTI</name>
<sequence>MSLSRLLIKDFRNIENADLALSPGFNFLVGANGSGKTSVLEAIYTLGHGRAFRSLQPGRVIRHEQEAFVLHGRLQGEERETSIGLTKDKQGDSKVRIDGTDGHKIAELAHLMPMQLITPEGFTLLNGGPKYRRAFLDWGCFHNEAGFFTAWSNLKRLLKQRNAALRQVSRYEQLRPWDKELIPLAEQISTWRAEYSSAIAQDMADTCQQFLPEFSLTFSFQRGWEKETDYADVLERSFERDRMLTYTAHGPHKADFRIRADGAPVEDTLSRGQLKLLMCALRLAQGEFLTRESGRRCLYLIDDFASELDDARRGLLASRLKATQSQVFVSAISAEHVIDMSDENSKMFTVEKGKITD</sequence>
<accession>Q8Z2N4</accession>
<feature type="initiator methionine" description="Removed" evidence="1">
    <location>
        <position position="1"/>
    </location>
</feature>
<feature type="chain" id="PRO_0000196451" description="DNA replication and repair protein RecF">
    <location>
        <begin position="2"/>
        <end position="357"/>
    </location>
</feature>
<feature type="binding site" evidence="2">
    <location>
        <begin position="30"/>
        <end position="37"/>
    </location>
    <ligand>
        <name>ATP</name>
        <dbReference type="ChEBI" id="CHEBI:30616"/>
    </ligand>
</feature>
<protein>
    <recommendedName>
        <fullName>DNA replication and repair protein RecF</fullName>
    </recommendedName>
</protein>